<name>NDUA3_NEUCR</name>
<keyword id="KW-0903">Direct protein sequencing</keyword>
<keyword id="KW-0249">Electron transport</keyword>
<keyword id="KW-0472">Membrane</keyword>
<keyword id="KW-0496">Mitochondrion</keyword>
<keyword id="KW-0999">Mitochondrion inner membrane</keyword>
<keyword id="KW-1185">Reference proteome</keyword>
<keyword id="KW-0679">Respiratory chain</keyword>
<keyword id="KW-0812">Transmembrane</keyword>
<keyword id="KW-1133">Transmembrane helix</keyword>
<keyword id="KW-0813">Transport</keyword>
<reference key="1">
    <citation type="journal article" date="1992" name="Biochemistry">
        <title>Characterization of the 9.5-kDa ubiquinone-binding protein of NADH:ubiquinone oxidoreductase (complex I) from Neurospora crassa.</title>
        <authorList>
            <person name="Heinrich H."/>
            <person name="Azevedo J.E."/>
            <person name="Werner S."/>
        </authorList>
    </citation>
    <scope>NUCLEOTIDE SEQUENCE [MRNA]</scope>
    <scope>PROTEIN SEQUENCE OF 2-7</scope>
    <source>
        <strain>ATCC 24698 / 74-OR23-1A / CBS 708.71 / DSM 1257 / FGSC 987</strain>
    </source>
</reference>
<reference key="2">
    <citation type="journal article" date="2003" name="Nature">
        <title>The genome sequence of the filamentous fungus Neurospora crassa.</title>
        <authorList>
            <person name="Galagan J.E."/>
            <person name="Calvo S.E."/>
            <person name="Borkovich K.A."/>
            <person name="Selker E.U."/>
            <person name="Read N.D."/>
            <person name="Jaffe D.B."/>
            <person name="FitzHugh W."/>
            <person name="Ma L.-J."/>
            <person name="Smirnov S."/>
            <person name="Purcell S."/>
            <person name="Rehman B."/>
            <person name="Elkins T."/>
            <person name="Engels R."/>
            <person name="Wang S."/>
            <person name="Nielsen C.B."/>
            <person name="Butler J."/>
            <person name="Endrizzi M."/>
            <person name="Qui D."/>
            <person name="Ianakiev P."/>
            <person name="Bell-Pedersen D."/>
            <person name="Nelson M.A."/>
            <person name="Werner-Washburne M."/>
            <person name="Selitrennikoff C.P."/>
            <person name="Kinsey J.A."/>
            <person name="Braun E.L."/>
            <person name="Zelter A."/>
            <person name="Schulte U."/>
            <person name="Kothe G.O."/>
            <person name="Jedd G."/>
            <person name="Mewes H.-W."/>
            <person name="Staben C."/>
            <person name="Marcotte E."/>
            <person name="Greenberg D."/>
            <person name="Roy A."/>
            <person name="Foley K."/>
            <person name="Naylor J."/>
            <person name="Stange-Thomann N."/>
            <person name="Barrett R."/>
            <person name="Gnerre S."/>
            <person name="Kamal M."/>
            <person name="Kamvysselis M."/>
            <person name="Mauceli E.W."/>
            <person name="Bielke C."/>
            <person name="Rudd S."/>
            <person name="Frishman D."/>
            <person name="Krystofova S."/>
            <person name="Rasmussen C."/>
            <person name="Metzenberg R.L."/>
            <person name="Perkins D.D."/>
            <person name="Kroken S."/>
            <person name="Cogoni C."/>
            <person name="Macino G."/>
            <person name="Catcheside D.E.A."/>
            <person name="Li W."/>
            <person name="Pratt R.J."/>
            <person name="Osmani S.A."/>
            <person name="DeSouza C.P.C."/>
            <person name="Glass N.L."/>
            <person name="Orbach M.J."/>
            <person name="Berglund J.A."/>
            <person name="Voelker R."/>
            <person name="Yarden O."/>
            <person name="Plamann M."/>
            <person name="Seiler S."/>
            <person name="Dunlap J.C."/>
            <person name="Radford A."/>
            <person name="Aramayo R."/>
            <person name="Natvig D.O."/>
            <person name="Alex L.A."/>
            <person name="Mannhaupt G."/>
            <person name="Ebbole D.J."/>
            <person name="Freitag M."/>
            <person name="Paulsen I."/>
            <person name="Sachs M.S."/>
            <person name="Lander E.S."/>
            <person name="Nusbaum C."/>
            <person name="Birren B.W."/>
        </authorList>
    </citation>
    <scope>NUCLEOTIDE SEQUENCE [LARGE SCALE GENOMIC DNA]</scope>
    <source>
        <strain>ATCC 24698 / 74-OR23-1A / CBS 708.71 / DSM 1257 / FGSC 987</strain>
    </source>
</reference>
<reference key="3">
    <citation type="journal article" date="1992" name="Biochemistry">
        <title>Identification of the ubiquinone-binding site of NADH:ubiquinone oxidoreductase (complex I) from Neurospora crassa.</title>
        <authorList>
            <person name="Heinrich H."/>
            <person name="Werner S."/>
        </authorList>
    </citation>
    <scope>CHARACTERIZATION</scope>
</reference>
<feature type="initiator methionine" description="Removed" evidence="2">
    <location>
        <position position="1"/>
    </location>
</feature>
<feature type="chain" id="PRO_0000118795" description="NADH-ubiquinone oxidoreductase 9.5 kDa subunit">
    <location>
        <begin position="2"/>
        <end position="82"/>
    </location>
</feature>
<feature type="transmembrane region" description="Helical" evidence="1">
    <location>
        <begin position="25"/>
        <end position="43"/>
    </location>
</feature>
<gene>
    <name type="primary">nuo9.5</name>
    <name type="ORF">NCU00670</name>
</gene>
<protein>
    <recommendedName>
        <fullName>NADH-ubiquinone oxidoreductase 9.5 kDa subunit</fullName>
    </recommendedName>
    <alternativeName>
        <fullName>Complex I-9.5kD</fullName>
        <shortName>CI-9.5</shortName>
    </alternativeName>
    <alternativeName>
        <fullName>Ubiquinone-binding protein</fullName>
    </alternativeName>
</protein>
<dbReference type="EMBL" id="S49807">
    <property type="protein sequence ID" value="AAB24322.1"/>
    <property type="molecule type" value="mRNA"/>
</dbReference>
<dbReference type="EMBL" id="CM002236">
    <property type="protein sequence ID" value="EAA36574.3"/>
    <property type="molecule type" value="Genomic_DNA"/>
</dbReference>
<dbReference type="PIR" id="A44210">
    <property type="entry name" value="A44210"/>
</dbReference>
<dbReference type="RefSeq" id="XP_965810.3">
    <property type="nucleotide sequence ID" value="XM_960717.3"/>
</dbReference>
<dbReference type="SMR" id="P42117"/>
<dbReference type="STRING" id="367110.P42117"/>
<dbReference type="PaxDb" id="5141-EFNCRP00000000869"/>
<dbReference type="EnsemblFungi" id="EAA36574">
    <property type="protein sequence ID" value="EAA36574"/>
    <property type="gene ID" value="NCU00670"/>
</dbReference>
<dbReference type="GeneID" id="3881935"/>
<dbReference type="KEGG" id="ncr:NCU00670"/>
<dbReference type="VEuPathDB" id="FungiDB:NCU00670"/>
<dbReference type="HOGENOM" id="CLU_2050261_0_0_1"/>
<dbReference type="InParanoid" id="P42117"/>
<dbReference type="OrthoDB" id="2093409at2759"/>
<dbReference type="Proteomes" id="UP000001805">
    <property type="component" value="Chromosome 1, Linkage Group I"/>
</dbReference>
<dbReference type="GO" id="GO:0005743">
    <property type="term" value="C:mitochondrial inner membrane"/>
    <property type="evidence" value="ECO:0007669"/>
    <property type="project" value="UniProtKB-SubCell"/>
</dbReference>
<dbReference type="CDD" id="cd22903">
    <property type="entry name" value="NI9M"/>
    <property type="match status" value="1"/>
</dbReference>
<dbReference type="InterPro" id="IPR039961">
    <property type="entry name" value="Nuo9.5"/>
</dbReference>
<dbReference type="PANTHER" id="PTHR38488">
    <property type="entry name" value="OXIDOREDUCTASE 9.5 KDA SUBUNIT, PUTATIVE (AFU_ORTHOLOGUE AFUA_5G08980)-RELATED"/>
    <property type="match status" value="1"/>
</dbReference>
<dbReference type="PANTHER" id="PTHR38488:SF1">
    <property type="entry name" value="OXIDOREDUCTASE 9.5 KDA SUBUNIT, PUTATIVE (AFU_ORTHOLOGUE AFUA_5G08980)-RELATED"/>
    <property type="match status" value="1"/>
</dbReference>
<sequence>MSGTIPHFWAQPFRYIRWSAREKPAYFYSCVIAGLGPVFLTVVPPVRKYFGDVNPAPIPVTYPIPTGPRKQLTGYDDDTEEA</sequence>
<evidence type="ECO:0000255" key="1"/>
<evidence type="ECO:0000269" key="2">
    <source>
    </source>
</evidence>
<evidence type="ECO:0000305" key="3"/>
<accession>P42117</accession>
<accession>Q7SHY3</accession>
<comment type="function">
    <text>Accessory subunit of the mitochondrial membrane respiratory chain NADH dehydrogenase (Complex I), that is believed not to be involved in catalysis. Complex I functions in the transfer of electrons from NADH to the respiratory chain. The immediate electron acceptor for the enzyme is believed to be ubiquinone. This subunit binds ubiquinone.</text>
</comment>
<comment type="subunit">
    <text>Complex I is composed of about 40 different subunits.</text>
</comment>
<comment type="subcellular location">
    <subcellularLocation>
        <location>Mitochondrion inner membrane</location>
        <topology>Single-pass membrane protein</topology>
    </subcellularLocation>
</comment>
<comment type="similarity">
    <text evidence="3">Belongs to the complex I NDUFA3 subunit family.</text>
</comment>
<proteinExistence type="evidence at protein level"/>
<organism>
    <name type="scientific">Neurospora crassa (strain ATCC 24698 / 74-OR23-1A / CBS 708.71 / DSM 1257 / FGSC 987)</name>
    <dbReference type="NCBI Taxonomy" id="367110"/>
    <lineage>
        <taxon>Eukaryota</taxon>
        <taxon>Fungi</taxon>
        <taxon>Dikarya</taxon>
        <taxon>Ascomycota</taxon>
        <taxon>Pezizomycotina</taxon>
        <taxon>Sordariomycetes</taxon>
        <taxon>Sordariomycetidae</taxon>
        <taxon>Sordariales</taxon>
        <taxon>Sordariaceae</taxon>
        <taxon>Neurospora</taxon>
    </lineage>
</organism>